<proteinExistence type="inferred from homology"/>
<feature type="chain" id="PRO_1000021655" description="Translation initiation factor 2 subunit beta">
    <location>
        <begin position="1"/>
        <end position="138"/>
    </location>
</feature>
<comment type="function">
    <text evidence="1">eIF-2 functions in the early steps of protein synthesis by forming a ternary complex with GTP and initiator tRNA.</text>
</comment>
<comment type="subunit">
    <text evidence="1">Heterotrimer composed of an alpha, a beta and a gamma chain.</text>
</comment>
<comment type="similarity">
    <text evidence="1">Belongs to the eIF-2-beta/eIF-5 family.</text>
</comment>
<accession>A6URT3</accession>
<evidence type="ECO:0000255" key="1">
    <source>
        <dbReference type="HAMAP-Rule" id="MF_00232"/>
    </source>
</evidence>
<gene>
    <name evidence="1" type="primary">eif2b</name>
    <name type="ordered locus">Mevan_1308</name>
</gene>
<reference key="1">
    <citation type="submission" date="2007-06" db="EMBL/GenBank/DDBJ databases">
        <title>Complete sequence of Methanococcus vannielii SB.</title>
        <authorList>
            <consortium name="US DOE Joint Genome Institute"/>
            <person name="Copeland A."/>
            <person name="Lucas S."/>
            <person name="Lapidus A."/>
            <person name="Barry K."/>
            <person name="Glavina del Rio T."/>
            <person name="Dalin E."/>
            <person name="Tice H."/>
            <person name="Pitluck S."/>
            <person name="Chain P."/>
            <person name="Malfatti S."/>
            <person name="Shin M."/>
            <person name="Vergez L."/>
            <person name="Schmutz J."/>
            <person name="Larimer F."/>
            <person name="Land M."/>
            <person name="Hauser L."/>
            <person name="Kyrpides N."/>
            <person name="Anderson I."/>
            <person name="Sieprawska-Lupa M."/>
            <person name="Whitman W.B."/>
            <person name="Richardson P."/>
        </authorList>
    </citation>
    <scope>NUCLEOTIDE SEQUENCE [LARGE SCALE GENOMIC DNA]</scope>
    <source>
        <strain>ATCC 35089 / DSM 1224 / JCM 13029 / OCM 148 / SB</strain>
    </source>
</reference>
<keyword id="KW-0396">Initiation factor</keyword>
<keyword id="KW-0648">Protein biosynthesis</keyword>
<dbReference type="EMBL" id="CP000742">
    <property type="protein sequence ID" value="ABR55205.1"/>
    <property type="molecule type" value="Genomic_DNA"/>
</dbReference>
<dbReference type="RefSeq" id="WP_012066120.1">
    <property type="nucleotide sequence ID" value="NC_009634.1"/>
</dbReference>
<dbReference type="SMR" id="A6URT3"/>
<dbReference type="STRING" id="406327.Mevan_1308"/>
<dbReference type="GeneID" id="5325155"/>
<dbReference type="KEGG" id="mvn:Mevan_1308"/>
<dbReference type="eggNOG" id="arCOG01640">
    <property type="taxonomic scope" value="Archaea"/>
</dbReference>
<dbReference type="HOGENOM" id="CLU_026663_3_1_2"/>
<dbReference type="OrthoDB" id="38099at2157"/>
<dbReference type="Proteomes" id="UP000001107">
    <property type="component" value="Chromosome"/>
</dbReference>
<dbReference type="GO" id="GO:0003743">
    <property type="term" value="F:translation initiation factor activity"/>
    <property type="evidence" value="ECO:0007669"/>
    <property type="project" value="UniProtKB-UniRule"/>
</dbReference>
<dbReference type="FunFam" id="3.30.30.170:FF:000001">
    <property type="entry name" value="Eukaryotic translation initiation factor 2 subunit"/>
    <property type="match status" value="1"/>
</dbReference>
<dbReference type="Gene3D" id="3.30.30.170">
    <property type="match status" value="1"/>
</dbReference>
<dbReference type="HAMAP" id="MF_00232">
    <property type="entry name" value="eIF_2_beta"/>
    <property type="match status" value="1"/>
</dbReference>
<dbReference type="InterPro" id="IPR045196">
    <property type="entry name" value="IF2/IF5"/>
</dbReference>
<dbReference type="InterPro" id="IPR004458">
    <property type="entry name" value="TIF2_bsu_arc"/>
</dbReference>
<dbReference type="InterPro" id="IPR002735">
    <property type="entry name" value="Transl_init_fac_IF2/IF5_dom"/>
</dbReference>
<dbReference type="InterPro" id="IPR016189">
    <property type="entry name" value="Transl_init_fac_IF2/IF5_N"/>
</dbReference>
<dbReference type="InterPro" id="IPR016190">
    <property type="entry name" value="Transl_init_fac_IF2/IF5_Zn-bd"/>
</dbReference>
<dbReference type="NCBIfam" id="TIGR00311">
    <property type="entry name" value="aIF-2beta"/>
    <property type="match status" value="1"/>
</dbReference>
<dbReference type="NCBIfam" id="NF003067">
    <property type="entry name" value="PRK03988.1"/>
    <property type="match status" value="1"/>
</dbReference>
<dbReference type="PANTHER" id="PTHR23001">
    <property type="entry name" value="EUKARYOTIC TRANSLATION INITIATION FACTOR"/>
    <property type="match status" value="1"/>
</dbReference>
<dbReference type="PANTHER" id="PTHR23001:SF3">
    <property type="entry name" value="EUKARYOTIC TRANSLATION INITIATION FACTOR 2 SUBUNIT 2"/>
    <property type="match status" value="1"/>
</dbReference>
<dbReference type="Pfam" id="PF01873">
    <property type="entry name" value="eIF-5_eIF-2B"/>
    <property type="match status" value="1"/>
</dbReference>
<dbReference type="SMART" id="SM00653">
    <property type="entry name" value="eIF2B_5"/>
    <property type="match status" value="1"/>
</dbReference>
<dbReference type="SUPFAM" id="SSF100966">
    <property type="entry name" value="Translation initiation factor 2 beta, aIF2beta, N-terminal domain"/>
    <property type="match status" value="1"/>
</dbReference>
<dbReference type="SUPFAM" id="SSF75689">
    <property type="entry name" value="Zinc-binding domain of translation initiation factor 2 beta"/>
    <property type="match status" value="1"/>
</dbReference>
<protein>
    <recommendedName>
        <fullName evidence="1">Translation initiation factor 2 subunit beta</fullName>
    </recommendedName>
    <alternativeName>
        <fullName evidence="1">aIF2-beta</fullName>
    </alternativeName>
    <alternativeName>
        <fullName evidence="1">eIF-2-beta</fullName>
    </alternativeName>
</protein>
<sequence length="138" mass="15994">MVDYFDYKELLKRARSQLPEVVFSDVRFEIPSADSFVEGNRTIIKNFKDIAKFMERDTHEFAKFVMKELGTAGDMEGNRLILQGKFGWRMVNEKIQNYVNEYVLCPECGKPDTKIIKEGRIHFLKCTACGAMKPLKSL</sequence>
<name>IF2B_METVS</name>
<organism>
    <name type="scientific">Methanococcus vannielii (strain ATCC 35089 / DSM 1224 / JCM 13029 / OCM 148 / SB)</name>
    <dbReference type="NCBI Taxonomy" id="406327"/>
    <lineage>
        <taxon>Archaea</taxon>
        <taxon>Methanobacteriati</taxon>
        <taxon>Methanobacteriota</taxon>
        <taxon>Methanomada group</taxon>
        <taxon>Methanococci</taxon>
        <taxon>Methanococcales</taxon>
        <taxon>Methanococcaceae</taxon>
        <taxon>Methanococcus</taxon>
    </lineage>
</organism>